<accession>Q4UM15</accession>
<name>EX7S_RICFE</name>
<gene>
    <name evidence="1" type="primary">xseB</name>
    <name type="ordered locus">RF_0557</name>
</gene>
<proteinExistence type="inferred from homology"/>
<reference key="1">
    <citation type="journal article" date="2005" name="PLoS Biol.">
        <title>The genome sequence of Rickettsia felis identifies the first putative conjugative plasmid in an obligate intracellular parasite.</title>
        <authorList>
            <person name="Ogata H."/>
            <person name="Renesto P."/>
            <person name="Audic S."/>
            <person name="Robert C."/>
            <person name="Blanc G."/>
            <person name="Fournier P.-E."/>
            <person name="Parinello H."/>
            <person name="Claverie J.-M."/>
            <person name="Raoult D."/>
        </authorList>
    </citation>
    <scope>NUCLEOTIDE SEQUENCE [LARGE SCALE GENOMIC DNA]</scope>
    <source>
        <strain>ATCC VR-1525 / URRWXCal2</strain>
    </source>
</reference>
<keyword id="KW-0963">Cytoplasm</keyword>
<keyword id="KW-0269">Exonuclease</keyword>
<keyword id="KW-0378">Hydrolase</keyword>
<keyword id="KW-0540">Nuclease</keyword>
<evidence type="ECO:0000255" key="1">
    <source>
        <dbReference type="HAMAP-Rule" id="MF_00337"/>
    </source>
</evidence>
<sequence length="80" mass="9119">MTNTKTLEENISFEEALKELEEIVKKIDNGQESLETAVNSFERGILLKNHCEKKLKEARLKIEKITKLADSTGVLEETEV</sequence>
<feature type="chain" id="PRO_0000272642" description="Exodeoxyribonuclease 7 small subunit">
    <location>
        <begin position="1"/>
        <end position="80"/>
    </location>
</feature>
<organism>
    <name type="scientific">Rickettsia felis (strain ATCC VR-1525 / URRWXCal2)</name>
    <name type="common">Rickettsia azadi</name>
    <dbReference type="NCBI Taxonomy" id="315456"/>
    <lineage>
        <taxon>Bacteria</taxon>
        <taxon>Pseudomonadati</taxon>
        <taxon>Pseudomonadota</taxon>
        <taxon>Alphaproteobacteria</taxon>
        <taxon>Rickettsiales</taxon>
        <taxon>Rickettsiaceae</taxon>
        <taxon>Rickettsieae</taxon>
        <taxon>Rickettsia</taxon>
        <taxon>spotted fever group</taxon>
    </lineage>
</organism>
<protein>
    <recommendedName>
        <fullName evidence="1">Exodeoxyribonuclease 7 small subunit</fullName>
        <ecNumber evidence="1">3.1.11.6</ecNumber>
    </recommendedName>
    <alternativeName>
        <fullName evidence="1">Exodeoxyribonuclease VII small subunit</fullName>
        <shortName evidence="1">Exonuclease VII small subunit</shortName>
    </alternativeName>
</protein>
<comment type="function">
    <text evidence="1">Bidirectionally degrades single-stranded DNA into large acid-insoluble oligonucleotides, which are then degraded further into small acid-soluble oligonucleotides.</text>
</comment>
<comment type="catalytic activity">
    <reaction evidence="1">
        <text>Exonucleolytic cleavage in either 5'- to 3'- or 3'- to 5'-direction to yield nucleoside 5'-phosphates.</text>
        <dbReference type="EC" id="3.1.11.6"/>
    </reaction>
</comment>
<comment type="subunit">
    <text evidence="1">Heterooligomer composed of large and small subunits.</text>
</comment>
<comment type="subcellular location">
    <subcellularLocation>
        <location evidence="1">Cytoplasm</location>
    </subcellularLocation>
</comment>
<comment type="similarity">
    <text evidence="1">Belongs to the XseB family.</text>
</comment>
<dbReference type="EC" id="3.1.11.6" evidence="1"/>
<dbReference type="EMBL" id="CP000053">
    <property type="protein sequence ID" value="AAY61408.1"/>
    <property type="molecule type" value="Genomic_DNA"/>
</dbReference>
<dbReference type="SMR" id="Q4UM15"/>
<dbReference type="STRING" id="315456.RF_0557"/>
<dbReference type="KEGG" id="rfe:RF_0557"/>
<dbReference type="eggNOG" id="COG1722">
    <property type="taxonomic scope" value="Bacteria"/>
</dbReference>
<dbReference type="HOGENOM" id="CLU_145918_0_3_5"/>
<dbReference type="OrthoDB" id="9808145at2"/>
<dbReference type="Proteomes" id="UP000008548">
    <property type="component" value="Chromosome"/>
</dbReference>
<dbReference type="GO" id="GO:0005829">
    <property type="term" value="C:cytosol"/>
    <property type="evidence" value="ECO:0007669"/>
    <property type="project" value="TreeGrafter"/>
</dbReference>
<dbReference type="GO" id="GO:0009318">
    <property type="term" value="C:exodeoxyribonuclease VII complex"/>
    <property type="evidence" value="ECO:0007669"/>
    <property type="project" value="InterPro"/>
</dbReference>
<dbReference type="GO" id="GO:0008855">
    <property type="term" value="F:exodeoxyribonuclease VII activity"/>
    <property type="evidence" value="ECO:0007669"/>
    <property type="project" value="UniProtKB-UniRule"/>
</dbReference>
<dbReference type="GO" id="GO:0006308">
    <property type="term" value="P:DNA catabolic process"/>
    <property type="evidence" value="ECO:0007669"/>
    <property type="project" value="UniProtKB-UniRule"/>
</dbReference>
<dbReference type="Gene3D" id="1.10.287.1040">
    <property type="entry name" value="Exonuclease VII, small subunit"/>
    <property type="match status" value="1"/>
</dbReference>
<dbReference type="HAMAP" id="MF_00337">
    <property type="entry name" value="Exonuc_7_S"/>
    <property type="match status" value="1"/>
</dbReference>
<dbReference type="InterPro" id="IPR003761">
    <property type="entry name" value="Exonuc_VII_S"/>
</dbReference>
<dbReference type="InterPro" id="IPR037004">
    <property type="entry name" value="Exonuc_VII_ssu_sf"/>
</dbReference>
<dbReference type="NCBIfam" id="NF002139">
    <property type="entry name" value="PRK00977.1-3"/>
    <property type="match status" value="1"/>
</dbReference>
<dbReference type="NCBIfam" id="NF002140">
    <property type="entry name" value="PRK00977.1-4"/>
    <property type="match status" value="1"/>
</dbReference>
<dbReference type="NCBIfam" id="TIGR01280">
    <property type="entry name" value="xseB"/>
    <property type="match status" value="1"/>
</dbReference>
<dbReference type="PANTHER" id="PTHR34137">
    <property type="entry name" value="EXODEOXYRIBONUCLEASE 7 SMALL SUBUNIT"/>
    <property type="match status" value="1"/>
</dbReference>
<dbReference type="PANTHER" id="PTHR34137:SF1">
    <property type="entry name" value="EXODEOXYRIBONUCLEASE 7 SMALL SUBUNIT"/>
    <property type="match status" value="1"/>
</dbReference>
<dbReference type="Pfam" id="PF02609">
    <property type="entry name" value="Exonuc_VII_S"/>
    <property type="match status" value="1"/>
</dbReference>
<dbReference type="PIRSF" id="PIRSF006488">
    <property type="entry name" value="Exonuc_VII_S"/>
    <property type="match status" value="1"/>
</dbReference>
<dbReference type="SUPFAM" id="SSF116842">
    <property type="entry name" value="XseB-like"/>
    <property type="match status" value="1"/>
</dbReference>